<evidence type="ECO:0000250" key="1">
    <source>
        <dbReference type="UniProtKB" id="Q13627"/>
    </source>
</evidence>
<evidence type="ECO:0000250" key="2">
    <source>
        <dbReference type="UniProtKB" id="Q61214"/>
    </source>
</evidence>
<evidence type="ECO:0000250" key="3">
    <source>
        <dbReference type="UniProtKB" id="Q63470"/>
    </source>
</evidence>
<evidence type="ECO:0000255" key="4"/>
<evidence type="ECO:0000255" key="5">
    <source>
        <dbReference type="PROSITE-ProRule" id="PRU00159"/>
    </source>
</evidence>
<evidence type="ECO:0000255" key="6">
    <source>
        <dbReference type="PROSITE-ProRule" id="PRU10027"/>
    </source>
</evidence>
<evidence type="ECO:0000256" key="7">
    <source>
        <dbReference type="SAM" id="MobiDB-lite"/>
    </source>
</evidence>
<evidence type="ECO:0000305" key="8"/>
<evidence type="ECO:0000312" key="9">
    <source>
        <dbReference type="EMBL" id="AAI21292.1"/>
    </source>
</evidence>
<dbReference type="EC" id="2.7.11.23" evidence="1"/>
<dbReference type="EC" id="2.7.12.1"/>
<dbReference type="EMBL" id="BC121291">
    <property type="protein sequence ID" value="AAI21292.1"/>
    <property type="molecule type" value="mRNA"/>
</dbReference>
<dbReference type="RefSeq" id="NP_001072280.1">
    <property type="nucleotide sequence ID" value="NM_001078812.1"/>
</dbReference>
<dbReference type="SMR" id="Q0IJ08"/>
<dbReference type="FunCoup" id="Q0IJ08">
    <property type="interactions" value="3678"/>
</dbReference>
<dbReference type="STRING" id="8364.ENSXETP00000036669"/>
<dbReference type="DNASU" id="779733"/>
<dbReference type="GeneID" id="779733"/>
<dbReference type="KEGG" id="xtr:779733"/>
<dbReference type="AGR" id="Xenbase:XB-GENE-1017105"/>
<dbReference type="CTD" id="1859"/>
<dbReference type="Xenbase" id="XB-GENE-1017105">
    <property type="gene designation" value="dyrk1a"/>
</dbReference>
<dbReference type="InParanoid" id="Q0IJ08"/>
<dbReference type="OrthoDB" id="9332038at2759"/>
<dbReference type="Reactome" id="R-XTR-1538133">
    <property type="pathway name" value="G0 and Early G1"/>
</dbReference>
<dbReference type="Proteomes" id="UP000008143">
    <property type="component" value="Chromosome 2"/>
</dbReference>
<dbReference type="GO" id="GO:0016607">
    <property type="term" value="C:nuclear speck"/>
    <property type="evidence" value="ECO:0000250"/>
    <property type="project" value="UniProtKB"/>
</dbReference>
<dbReference type="GO" id="GO:0005634">
    <property type="term" value="C:nucleus"/>
    <property type="evidence" value="ECO:0000250"/>
    <property type="project" value="UniProtKB"/>
</dbReference>
<dbReference type="GO" id="GO:0005524">
    <property type="term" value="F:ATP binding"/>
    <property type="evidence" value="ECO:0007669"/>
    <property type="project" value="UniProtKB-KW"/>
</dbReference>
<dbReference type="GO" id="GO:0106310">
    <property type="term" value="F:protein serine kinase activity"/>
    <property type="evidence" value="ECO:0007669"/>
    <property type="project" value="RHEA"/>
</dbReference>
<dbReference type="GO" id="GO:0004674">
    <property type="term" value="F:protein serine/threonine kinase activity"/>
    <property type="evidence" value="ECO:0000250"/>
    <property type="project" value="UniProtKB"/>
</dbReference>
<dbReference type="GO" id="GO:0004712">
    <property type="term" value="F:protein serine/threonine/tyrosine kinase activity"/>
    <property type="evidence" value="ECO:0007669"/>
    <property type="project" value="UniProtKB-EC"/>
</dbReference>
<dbReference type="GO" id="GO:0004713">
    <property type="term" value="F:protein tyrosine kinase activity"/>
    <property type="evidence" value="ECO:0000250"/>
    <property type="project" value="UniProtKB"/>
</dbReference>
<dbReference type="GO" id="GO:0008353">
    <property type="term" value="F:RNA polymerase II CTD heptapeptide repeat kinase activity"/>
    <property type="evidence" value="ECO:0000250"/>
    <property type="project" value="UniProtKB"/>
</dbReference>
<dbReference type="GO" id="GO:0018108">
    <property type="term" value="P:peptidyl-tyrosine phosphorylation"/>
    <property type="evidence" value="ECO:0000250"/>
    <property type="project" value="UniProtKB"/>
</dbReference>
<dbReference type="GO" id="GO:0046777">
    <property type="term" value="P:protein autophosphorylation"/>
    <property type="evidence" value="ECO:0000250"/>
    <property type="project" value="UniProtKB"/>
</dbReference>
<dbReference type="GO" id="GO:0006468">
    <property type="term" value="P:protein phosphorylation"/>
    <property type="evidence" value="ECO:0000250"/>
    <property type="project" value="UniProtKB"/>
</dbReference>
<dbReference type="CDD" id="cd14226">
    <property type="entry name" value="PKc_DYRK1"/>
    <property type="match status" value="1"/>
</dbReference>
<dbReference type="FunFam" id="3.30.200.20:FF:000087">
    <property type="entry name" value="Dual specificity tyrosine-phosphorylation-regulated kinase 1A"/>
    <property type="match status" value="1"/>
</dbReference>
<dbReference type="FunFam" id="1.10.510.10:FF:000264">
    <property type="entry name" value="dual specificity tyrosine-phosphorylation-regulated kinase 1B isoform X3"/>
    <property type="match status" value="1"/>
</dbReference>
<dbReference type="Gene3D" id="3.30.200.20">
    <property type="entry name" value="Phosphorylase Kinase, domain 1"/>
    <property type="match status" value="1"/>
</dbReference>
<dbReference type="Gene3D" id="1.10.510.10">
    <property type="entry name" value="Transferase(Phosphotransferase) domain 1"/>
    <property type="match status" value="1"/>
</dbReference>
<dbReference type="InterPro" id="IPR011009">
    <property type="entry name" value="Kinase-like_dom_sf"/>
</dbReference>
<dbReference type="InterPro" id="IPR044131">
    <property type="entry name" value="PKc_DYR1A/1B"/>
</dbReference>
<dbReference type="InterPro" id="IPR000719">
    <property type="entry name" value="Prot_kinase_dom"/>
</dbReference>
<dbReference type="InterPro" id="IPR017441">
    <property type="entry name" value="Protein_kinase_ATP_BS"/>
</dbReference>
<dbReference type="InterPro" id="IPR008271">
    <property type="entry name" value="Ser/Thr_kinase_AS"/>
</dbReference>
<dbReference type="InterPro" id="IPR050494">
    <property type="entry name" value="Ser_Thr_dual-spec_kinase"/>
</dbReference>
<dbReference type="PANTHER" id="PTHR24058">
    <property type="entry name" value="DUAL SPECIFICITY PROTEIN KINASE"/>
    <property type="match status" value="1"/>
</dbReference>
<dbReference type="PANTHER" id="PTHR24058:SF121">
    <property type="entry name" value="DUAL SPECIFICITY TYROSINE-PHOSPHORYLATION-REGULATED KINASE 1A"/>
    <property type="match status" value="1"/>
</dbReference>
<dbReference type="Pfam" id="PF00069">
    <property type="entry name" value="Pkinase"/>
    <property type="match status" value="1"/>
</dbReference>
<dbReference type="SMART" id="SM00220">
    <property type="entry name" value="S_TKc"/>
    <property type="match status" value="1"/>
</dbReference>
<dbReference type="SUPFAM" id="SSF56112">
    <property type="entry name" value="Protein kinase-like (PK-like)"/>
    <property type="match status" value="1"/>
</dbReference>
<dbReference type="PROSITE" id="PS00107">
    <property type="entry name" value="PROTEIN_KINASE_ATP"/>
    <property type="match status" value="1"/>
</dbReference>
<dbReference type="PROSITE" id="PS50011">
    <property type="entry name" value="PROTEIN_KINASE_DOM"/>
    <property type="match status" value="1"/>
</dbReference>
<dbReference type="PROSITE" id="PS00108">
    <property type="entry name" value="PROTEIN_KINASE_ST"/>
    <property type="match status" value="1"/>
</dbReference>
<organism>
    <name type="scientific">Xenopus tropicalis</name>
    <name type="common">Western clawed frog</name>
    <name type="synonym">Silurana tropicalis</name>
    <dbReference type="NCBI Taxonomy" id="8364"/>
    <lineage>
        <taxon>Eukaryota</taxon>
        <taxon>Metazoa</taxon>
        <taxon>Chordata</taxon>
        <taxon>Craniata</taxon>
        <taxon>Vertebrata</taxon>
        <taxon>Euteleostomi</taxon>
        <taxon>Amphibia</taxon>
        <taxon>Batrachia</taxon>
        <taxon>Anura</taxon>
        <taxon>Pipoidea</taxon>
        <taxon>Pipidae</taxon>
        <taxon>Xenopodinae</taxon>
        <taxon>Xenopus</taxon>
        <taxon>Silurana</taxon>
    </lineage>
</organism>
<proteinExistence type="evidence at transcript level"/>
<protein>
    <recommendedName>
        <fullName>Dual specificity tyrosine-phosphorylation-regulated kinase 1A</fullName>
        <ecNumber evidence="1">2.7.11.23</ecNumber>
        <ecNumber>2.7.12.1</ecNumber>
    </recommendedName>
    <alternativeName>
        <fullName>Protein kinase minibrain homolog</fullName>
    </alternativeName>
</protein>
<name>DYR1A_XENTR</name>
<sequence length="751" mass="84292">MHTGGETSACKPSSVRLAPSFSFHAAGLQMAGQMSHSHQQYSDRRQQNLNDQQASALPYNDQIQQPLPNQRRMPQTFRDPATAPLRKLSVDLIKTYKHINEVYYAKKKRRHQQGQGDDSSHKKERKVYNDGYDDDNYDYIVKNGEKWMDRYEIDSLIGKGSFGQVVKAYDRAEQEWVAIKIIKNKKAFLNQAQIEVRLLELMNKHDTEMKYYIVHLKRHFMFRNHLCLVFEMLSYNLYDLLRNTNFRGVSLNLTRKFAQQMCTALLFLATPELSIIHCDLKPENILLCNPKRSAIKIVDFGSSCQLGQRIYQYIQSRFYRSPEVLLGMPYDLAIDMWSLGCILVEMHTGEPLFSGANEVDQMSKIVEVLGIPPAHILDQAPKARKFFEKMPEGTWNLKKTKDGKKEYKPPGTRKLHNLLGVETGGPGGRRGGESGHTVADYLKFKDLILRMLDYDAKTRIQPYYALQHSFFKKTADEGTNTSNSVSTSPAMEQSQSSGTTSSTSSSSGGSSGTSNSGRARSDPTHQHRHSGGHFTAAVQAMDCETHSPQVRQQFPPGWTVPEAPTQVTIETHPVQETTFHVPSSQQNVPHHHGNGSHHHHHHHHHHHGQHVLSNRTRTRIYNSPSTSSSTQDSMDVGHSHHSMTSLSSSTTSSSTSSSSTGNQGNQAYQNRPVAANTLDFGQNGTMDVNLTAFSNPRQETGITGHPDYQYSANTGPGHYVTEGHLTMRQGMDREDSPMTGVCVQQSPVASS</sequence>
<comment type="function">
    <text evidence="1 2 3">Dual-specificity kinase which possesses both serine/threonine and tyrosine kinase activities. Exhibits a substrate preference for proline at position P+1 and arginine at position P-3. Plays an important role in double-strand breaks (DSBs) repair following DNA damage. Mechanistically, phosphorylates RNF169 and increases its ability to block accumulation of TP53BP1 at the DSB sites thereby promoting homologous recombination repair (HRR). Also acts as a positive regulator of transcription by acting as a CTD kinase that mediates phosphorylation of the CTD (C-terminal domain) of the large subunit of RNA polymerase II (RNAP II) POLR2A (By similarity). Modulates alternative splicing by phosphorylating the splice factor SRSF6 (By similarity). Phosphorylates SEPTIN4, SEPTIN5 and SF3B1 (By similarity).</text>
</comment>
<comment type="catalytic activity">
    <reaction evidence="1">
        <text>L-seryl-[protein] + ATP = O-phospho-L-seryl-[protein] + ADP + H(+)</text>
        <dbReference type="Rhea" id="RHEA:17989"/>
        <dbReference type="Rhea" id="RHEA-COMP:9863"/>
        <dbReference type="Rhea" id="RHEA-COMP:11604"/>
        <dbReference type="ChEBI" id="CHEBI:15378"/>
        <dbReference type="ChEBI" id="CHEBI:29999"/>
        <dbReference type="ChEBI" id="CHEBI:30616"/>
        <dbReference type="ChEBI" id="CHEBI:83421"/>
        <dbReference type="ChEBI" id="CHEBI:456216"/>
        <dbReference type="EC" id="2.7.12.1"/>
    </reaction>
</comment>
<comment type="catalytic activity">
    <reaction evidence="1">
        <text>L-threonyl-[protein] + ATP = O-phospho-L-threonyl-[protein] + ADP + H(+)</text>
        <dbReference type="Rhea" id="RHEA:46608"/>
        <dbReference type="Rhea" id="RHEA-COMP:11060"/>
        <dbReference type="Rhea" id="RHEA-COMP:11605"/>
        <dbReference type="ChEBI" id="CHEBI:15378"/>
        <dbReference type="ChEBI" id="CHEBI:30013"/>
        <dbReference type="ChEBI" id="CHEBI:30616"/>
        <dbReference type="ChEBI" id="CHEBI:61977"/>
        <dbReference type="ChEBI" id="CHEBI:456216"/>
        <dbReference type="EC" id="2.7.12.1"/>
    </reaction>
</comment>
<comment type="catalytic activity">
    <reaction evidence="1">
        <text>L-tyrosyl-[protein] + ATP = O-phospho-L-tyrosyl-[protein] + ADP + H(+)</text>
        <dbReference type="Rhea" id="RHEA:10596"/>
        <dbReference type="Rhea" id="RHEA-COMP:10136"/>
        <dbReference type="Rhea" id="RHEA-COMP:20101"/>
        <dbReference type="ChEBI" id="CHEBI:15378"/>
        <dbReference type="ChEBI" id="CHEBI:30616"/>
        <dbReference type="ChEBI" id="CHEBI:46858"/>
        <dbReference type="ChEBI" id="CHEBI:61978"/>
        <dbReference type="ChEBI" id="CHEBI:456216"/>
        <dbReference type="EC" id="2.7.12.1"/>
    </reaction>
</comment>
<comment type="catalytic activity">
    <reaction evidence="1">
        <text>[DNA-directed RNA polymerase] + ATP = phospho-[DNA-directed RNA polymerase] + ADP + H(+)</text>
        <dbReference type="Rhea" id="RHEA:10216"/>
        <dbReference type="Rhea" id="RHEA-COMP:11321"/>
        <dbReference type="Rhea" id="RHEA-COMP:11322"/>
        <dbReference type="ChEBI" id="CHEBI:15378"/>
        <dbReference type="ChEBI" id="CHEBI:30616"/>
        <dbReference type="ChEBI" id="CHEBI:43176"/>
        <dbReference type="ChEBI" id="CHEBI:68546"/>
        <dbReference type="ChEBI" id="CHEBI:456216"/>
        <dbReference type="EC" id="2.7.11.23"/>
    </reaction>
    <physiologicalReaction direction="left-to-right" evidence="1">
        <dbReference type="Rhea" id="RHEA:10217"/>
    </physiologicalReaction>
</comment>
<comment type="subcellular location">
    <subcellularLocation>
        <location evidence="1">Nucleus</location>
    </subcellularLocation>
    <subcellularLocation>
        <location evidence="2">Nucleus speckle</location>
    </subcellularLocation>
</comment>
<comment type="domain">
    <text evidence="1">The histidine-rich domain (HRD) region is intrinsically disordered and promotes the formation of phase-separated liquid droplets that enhance its ability to phosphorylate the CTD (C-terminal domain) of the large subunit of RNA polymerase II (RNA Pol II).</text>
</comment>
<comment type="PTM">
    <text evidence="1">Autophosphorylated on tyrosine residues.</text>
</comment>
<comment type="similarity">
    <text evidence="8">Belongs to the protein kinase superfamily. CMGC Ser/Thr protein kinase family. MNB/DYRK subfamily.</text>
</comment>
<gene>
    <name evidence="1" type="primary">dyrk1a</name>
    <name evidence="9" type="synonym">mnb</name>
</gene>
<keyword id="KW-0067">ATP-binding</keyword>
<keyword id="KW-0418">Kinase</keyword>
<keyword id="KW-0547">Nucleotide-binding</keyword>
<keyword id="KW-0539">Nucleus</keyword>
<keyword id="KW-0597">Phosphoprotein</keyword>
<keyword id="KW-1185">Reference proteome</keyword>
<keyword id="KW-0723">Serine/threonine-protein kinase</keyword>
<keyword id="KW-0804">Transcription</keyword>
<keyword id="KW-0805">Transcription regulation</keyword>
<keyword id="KW-0808">Transferase</keyword>
<keyword id="KW-0829">Tyrosine-protein kinase</keyword>
<accession>Q0IJ08</accession>
<reference evidence="9" key="1">
    <citation type="submission" date="2006-08" db="EMBL/GenBank/DDBJ databases">
        <authorList>
            <consortium name="NIH - Xenopus Gene Collection (XGC) project"/>
        </authorList>
    </citation>
    <scope>NUCLEOTIDE SEQUENCE [LARGE SCALE MRNA]</scope>
    <source>
        <tissue evidence="9">Testis</tissue>
    </source>
</reference>
<feature type="chain" id="PRO_0000284708" description="Dual specificity tyrosine-phosphorylation-regulated kinase 1A">
    <location>
        <begin position="1"/>
        <end position="751"/>
    </location>
</feature>
<feature type="domain" description="Protein kinase" evidence="5">
    <location>
        <begin position="151"/>
        <end position="471"/>
    </location>
</feature>
<feature type="region of interest" description="Disordered" evidence="7">
    <location>
        <begin position="59"/>
        <end position="81"/>
    </location>
</feature>
<feature type="region of interest" description="Disordered" evidence="7">
    <location>
        <begin position="104"/>
        <end position="129"/>
    </location>
</feature>
<feature type="region of interest" description="Disordered" evidence="7">
    <location>
        <begin position="477"/>
        <end position="532"/>
    </location>
</feature>
<feature type="region of interest" description="Disordered" evidence="7">
    <location>
        <begin position="580"/>
        <end position="667"/>
    </location>
</feature>
<feature type="region of interest" description="Histidine-rich domain (HRD)" evidence="1">
    <location>
        <begin position="585"/>
        <end position="613"/>
    </location>
</feature>
<feature type="region of interest" description="Disordered" evidence="7">
    <location>
        <begin position="730"/>
        <end position="751"/>
    </location>
</feature>
<feature type="short sequence motif" description="Bipartite nuclear localization signal" evidence="4">
    <location>
        <begin position="109"/>
        <end position="126"/>
    </location>
</feature>
<feature type="compositionally biased region" description="Polar residues" evidence="7">
    <location>
        <begin position="59"/>
        <end position="68"/>
    </location>
</feature>
<feature type="compositionally biased region" description="Polar residues" evidence="7">
    <location>
        <begin position="477"/>
        <end position="493"/>
    </location>
</feature>
<feature type="compositionally biased region" description="Low complexity" evidence="7">
    <location>
        <begin position="494"/>
        <end position="517"/>
    </location>
</feature>
<feature type="compositionally biased region" description="Basic residues" evidence="7">
    <location>
        <begin position="589"/>
        <end position="609"/>
    </location>
</feature>
<feature type="compositionally biased region" description="Polar residues" evidence="7">
    <location>
        <begin position="611"/>
        <end position="622"/>
    </location>
</feature>
<feature type="compositionally biased region" description="Low complexity" evidence="7">
    <location>
        <begin position="623"/>
        <end position="633"/>
    </location>
</feature>
<feature type="compositionally biased region" description="Low complexity" evidence="7">
    <location>
        <begin position="642"/>
        <end position="660"/>
    </location>
</feature>
<feature type="compositionally biased region" description="Polar residues" evidence="7">
    <location>
        <begin position="742"/>
        <end position="751"/>
    </location>
</feature>
<feature type="active site" description="Proton acceptor" evidence="5 6">
    <location>
        <position position="279"/>
    </location>
</feature>
<feature type="binding site" evidence="5">
    <location>
        <begin position="157"/>
        <end position="165"/>
    </location>
    <ligand>
        <name>ATP</name>
        <dbReference type="ChEBI" id="CHEBI:30616"/>
    </ligand>
</feature>
<feature type="binding site" evidence="5">
    <location>
        <position position="180"/>
    </location>
    <ligand>
        <name>ATP</name>
        <dbReference type="ChEBI" id="CHEBI:30616"/>
    </ligand>
</feature>
<feature type="binding site" evidence="5">
    <location>
        <begin position="230"/>
        <end position="233"/>
    </location>
    <ligand>
        <name>ATP</name>
        <dbReference type="ChEBI" id="CHEBI:30616"/>
    </ligand>
</feature>